<sequence length="101" mass="11284">MNKSMIILCAVLFLTYIIEENEALKVEDLPEPESYKRAKELAVKDAKGDKKAEGVAFQILKDNRKDCMTNCKLVPTCHLLSPECCPKQTPVCLQLDVVKSG</sequence>
<proteinExistence type="inferred from homology"/>
<reference key="1">
    <citation type="journal article" date="2014" name="Mol. Biol. Evol.">
        <title>Clawing through evolution: toxin diversification and convergence in the ancient lineage Chilopoda (centipedes).</title>
        <authorList>
            <person name="Undheim E.A."/>
            <person name="Jones A."/>
            <person name="Clauser K.R."/>
            <person name="Holland J.W."/>
            <person name="Pineda S.S."/>
            <person name="King G.F."/>
            <person name="Fry B.G."/>
        </authorList>
    </citation>
    <scope>NUCLEOTIDE SEQUENCE [MRNA]</scope>
    <scope>NOMENCLATURE</scope>
    <source>
        <tissue>Venom gland</tissue>
    </source>
</reference>
<feature type="signal peptide" evidence="1">
    <location>
        <begin position="1"/>
        <end position="23"/>
    </location>
</feature>
<feature type="chain" id="PRO_0000446756" description="U-scoloptoxin(10)-Sm2a" evidence="3">
    <location>
        <begin position="24"/>
        <end position="101"/>
    </location>
</feature>
<organism>
    <name type="scientific">Scolopendra morsitans</name>
    <name type="common">Tanzanian blue ringleg centipede</name>
    <dbReference type="NCBI Taxonomy" id="943129"/>
    <lineage>
        <taxon>Eukaryota</taxon>
        <taxon>Metazoa</taxon>
        <taxon>Ecdysozoa</taxon>
        <taxon>Arthropoda</taxon>
        <taxon>Myriapoda</taxon>
        <taxon>Chilopoda</taxon>
        <taxon>Pleurostigmophora</taxon>
        <taxon>Scolopendromorpha</taxon>
        <taxon>Scolopendridae</taxon>
        <taxon>Scolopendra</taxon>
    </lineage>
</organism>
<comment type="subcellular location">
    <subcellularLocation>
        <location evidence="4">Secreted</location>
    </subcellularLocation>
</comment>
<comment type="tissue specificity">
    <text evidence="4">Expressed by the venom gland.</text>
</comment>
<comment type="PTM">
    <text evidence="3">Contains 3 disulfide bonds.</text>
</comment>
<comment type="similarity">
    <text evidence="3">Belongs to the scoloptoxin-10 family.</text>
</comment>
<comment type="caution">
    <text evidence="4">All S.morsitans family members described in 'Undeheim et al., 2014' have not been imported into UniProtKB. Please, refer to this paper to access them.</text>
</comment>
<comment type="online information" name="National Center for Biotechnology Information (NCBI)">
    <link uri="https://www.ncbi.nlm.nih.gov/nuccore/GASH01000117"/>
</comment>
<name>TXA2A_SCOMO</name>
<accession>P0DPY5</accession>
<keyword id="KW-1015">Disulfide bond</keyword>
<keyword id="KW-0964">Secreted</keyword>
<keyword id="KW-0732">Signal</keyword>
<keyword id="KW-0800">Toxin</keyword>
<dbReference type="GO" id="GO:0005576">
    <property type="term" value="C:extracellular region"/>
    <property type="evidence" value="ECO:0007669"/>
    <property type="project" value="UniProtKB-SubCell"/>
</dbReference>
<dbReference type="GO" id="GO:0090729">
    <property type="term" value="F:toxin activity"/>
    <property type="evidence" value="ECO:0007669"/>
    <property type="project" value="UniProtKB-KW"/>
</dbReference>
<evidence type="ECO:0000255" key="1"/>
<evidence type="ECO:0000303" key="2">
    <source>
    </source>
</evidence>
<evidence type="ECO:0000305" key="3"/>
<evidence type="ECO:0000305" key="4">
    <source>
    </source>
</evidence>
<protein>
    <recommendedName>
        <fullName evidence="2">U-scoloptoxin(10)-Sm2a</fullName>
        <shortName evidence="2">U-SLPTX(10)-Sm2a</shortName>
    </recommendedName>
</protein>